<sequence length="100" mass="10941">MQPRVLLVAALLVLLASARALEAEDPSLLGLMQGYMQHATKTAQDTLTSVQESQVAQRARDWMTDGFSSLKDYWSTFKGKFSGFWDSASEVQPTPASDAS</sequence>
<comment type="function">
    <text evidence="2">Component of triglyceride-rich very low density lipoproteins (VLDL) and high density lipoproteins (HDL) in plasma. Plays a multifaceted role in triglyceride homeostasis. Intracellularly, promotes hepatic very low density lipoprotein 1 (VLDL1) assembly and secretion; extracellularly, attenuates hydrolysis and clearance of triglyceride-rich lipoproteins (TRLs). Impairs the lipolysis of TRLs by inhibiting lipoprotein lipase and the hepatic uptake of TRLs by remnant receptors. Formed of several curved helices connected via semiflexible hinges, so that it can wrap tightly around the curved micelle surface and easily adapt to the different diameters of its natural binding partners.</text>
</comment>
<comment type="subcellular location">
    <subcellularLocation>
        <location evidence="2">Secreted</location>
    </subcellularLocation>
</comment>
<comment type="PTM">
    <text evidence="2">The most abundant glycoforms are characterized by an O-linked disaccharide galactose linked to N-acetylgalactosamine (Gal-GalNAc), further modified with up to 3 sialic acid residues. Less abundant glycoforms are characterized by more complex and fucosylated glycan moieties. O-glycosylated on Thr-94 with a core 1 or possibly core 8 glycan.</text>
</comment>
<comment type="similarity">
    <text evidence="4">Belongs to the apolipoprotein C3 family.</text>
</comment>
<evidence type="ECO:0000250" key="1"/>
<evidence type="ECO:0000250" key="2">
    <source>
        <dbReference type="UniProtKB" id="P02656"/>
    </source>
</evidence>
<evidence type="ECO:0000255" key="3"/>
<evidence type="ECO:0000305" key="4"/>
<protein>
    <recommendedName>
        <fullName>Apolipoprotein C-III</fullName>
        <shortName>Apo-CIII</shortName>
        <shortName>ApoC-III</shortName>
    </recommendedName>
    <alternativeName>
        <fullName>Apolipoprotein C3</fullName>
    </alternativeName>
</protein>
<dbReference type="EMBL" id="ML169427">
    <property type="status" value="NOT_ANNOTATED_CDS"/>
    <property type="molecule type" value="Genomic_DNA"/>
</dbReference>
<dbReference type="RefSeq" id="XP_032283927.1">
    <property type="nucleotide sequence ID" value="XM_032428036.1"/>
</dbReference>
<dbReference type="SMR" id="P0DTS5"/>
<dbReference type="GlyCosmos" id="P0DTS5">
    <property type="glycosylation" value="1 site, No reported glycans"/>
</dbReference>
<dbReference type="GeneID" id="116646958"/>
<dbReference type="GO" id="GO:0042627">
    <property type="term" value="C:chylomicron"/>
    <property type="evidence" value="ECO:0007669"/>
    <property type="project" value="UniProtKB-KW"/>
</dbReference>
<dbReference type="GO" id="GO:0034363">
    <property type="term" value="C:intermediate-density lipoprotein particle"/>
    <property type="evidence" value="ECO:0007669"/>
    <property type="project" value="TreeGrafter"/>
</dbReference>
<dbReference type="GO" id="GO:0034366">
    <property type="term" value="C:spherical high-density lipoprotein particle"/>
    <property type="evidence" value="ECO:0007669"/>
    <property type="project" value="TreeGrafter"/>
</dbReference>
<dbReference type="GO" id="GO:0034361">
    <property type="term" value="C:very-low-density lipoprotein particle"/>
    <property type="evidence" value="ECO:0007669"/>
    <property type="project" value="UniProtKB-KW"/>
</dbReference>
<dbReference type="GO" id="GO:0070653">
    <property type="term" value="F:high-density lipoprotein particle receptor binding"/>
    <property type="evidence" value="ECO:0007669"/>
    <property type="project" value="TreeGrafter"/>
</dbReference>
<dbReference type="GO" id="GO:0055102">
    <property type="term" value="F:lipase inhibitor activity"/>
    <property type="evidence" value="ECO:0007669"/>
    <property type="project" value="TreeGrafter"/>
</dbReference>
<dbReference type="GO" id="GO:0005543">
    <property type="term" value="F:phospholipid binding"/>
    <property type="evidence" value="ECO:0007669"/>
    <property type="project" value="TreeGrafter"/>
</dbReference>
<dbReference type="GO" id="GO:0042632">
    <property type="term" value="P:cholesterol homeostasis"/>
    <property type="evidence" value="ECO:0007669"/>
    <property type="project" value="TreeGrafter"/>
</dbReference>
<dbReference type="GO" id="GO:0016042">
    <property type="term" value="P:lipid catabolic process"/>
    <property type="evidence" value="ECO:0007669"/>
    <property type="project" value="UniProtKB-KW"/>
</dbReference>
<dbReference type="GO" id="GO:0006869">
    <property type="term" value="P:lipid transport"/>
    <property type="evidence" value="ECO:0007669"/>
    <property type="project" value="UniProtKB-KW"/>
</dbReference>
<dbReference type="GO" id="GO:0042157">
    <property type="term" value="P:lipoprotein metabolic process"/>
    <property type="evidence" value="ECO:0007669"/>
    <property type="project" value="InterPro"/>
</dbReference>
<dbReference type="GO" id="GO:0010987">
    <property type="term" value="P:negative regulation of high-density lipoprotein particle clearance"/>
    <property type="evidence" value="ECO:0007669"/>
    <property type="project" value="TreeGrafter"/>
</dbReference>
<dbReference type="GO" id="GO:0010989">
    <property type="term" value="P:negative regulation of low-density lipoprotein particle clearance"/>
    <property type="evidence" value="ECO:0007669"/>
    <property type="project" value="TreeGrafter"/>
</dbReference>
<dbReference type="GO" id="GO:0010897">
    <property type="term" value="P:negative regulation of triglyceride catabolic process"/>
    <property type="evidence" value="ECO:0007669"/>
    <property type="project" value="TreeGrafter"/>
</dbReference>
<dbReference type="GO" id="GO:0010916">
    <property type="term" value="P:negative regulation of very-low-density lipoprotein particle clearance"/>
    <property type="evidence" value="ECO:0007669"/>
    <property type="project" value="TreeGrafter"/>
</dbReference>
<dbReference type="GO" id="GO:0070328">
    <property type="term" value="P:triglyceride homeostasis"/>
    <property type="evidence" value="ECO:0007669"/>
    <property type="project" value="TreeGrafter"/>
</dbReference>
<dbReference type="Gene3D" id="6.10.90.10">
    <property type="entry name" value="Apolipoprotein CIII"/>
    <property type="match status" value="1"/>
</dbReference>
<dbReference type="InterPro" id="IPR008403">
    <property type="entry name" value="Apo-CIII"/>
</dbReference>
<dbReference type="InterPro" id="IPR038195">
    <property type="entry name" value="Apo_CIII_sf"/>
</dbReference>
<dbReference type="PANTHER" id="PTHR14225">
    <property type="entry name" value="APOLIPOPROTEIN C-III"/>
    <property type="match status" value="1"/>
</dbReference>
<dbReference type="PANTHER" id="PTHR14225:SF0">
    <property type="entry name" value="APOLIPOPROTEIN C-III"/>
    <property type="match status" value="1"/>
</dbReference>
<dbReference type="Pfam" id="PF05778">
    <property type="entry name" value="Apo-CIII"/>
    <property type="match status" value="1"/>
</dbReference>
<gene>
    <name type="primary">APOC3</name>
</gene>
<keyword id="KW-0162">Chylomicron</keyword>
<keyword id="KW-0325">Glycoprotein</keyword>
<keyword id="KW-0442">Lipid degradation</keyword>
<keyword id="KW-0443">Lipid metabolism</keyword>
<keyword id="KW-0445">Lipid transport</keyword>
<keyword id="KW-0964">Secreted</keyword>
<keyword id="KW-0730">Sialic acid</keyword>
<keyword id="KW-0732">Signal</keyword>
<keyword id="KW-0813">Transport</keyword>
<keyword id="KW-0850">VLDL</keyword>
<feature type="signal peptide" evidence="3">
    <location>
        <begin position="1"/>
        <end position="20"/>
    </location>
</feature>
<feature type="chain" id="PRO_0000448772" description="Apolipoprotein C-III">
    <location>
        <begin position="21"/>
        <end position="100"/>
    </location>
</feature>
<feature type="region of interest" description="Lipid-binding" evidence="1">
    <location>
        <begin position="68"/>
        <end position="100"/>
    </location>
</feature>
<feature type="site" description="May interact with the LDL receptor" evidence="2">
    <location>
        <position position="41"/>
    </location>
</feature>
<feature type="glycosylation site" description="O-linked (GalNAc...) threonine" evidence="2">
    <location>
        <position position="94"/>
    </location>
</feature>
<name>APOC3_PHOVI</name>
<organism>
    <name type="scientific">Phoca vitulina</name>
    <name type="common">Harbor seal</name>
    <dbReference type="NCBI Taxonomy" id="9720"/>
    <lineage>
        <taxon>Eukaryota</taxon>
        <taxon>Metazoa</taxon>
        <taxon>Chordata</taxon>
        <taxon>Craniata</taxon>
        <taxon>Vertebrata</taxon>
        <taxon>Euteleostomi</taxon>
        <taxon>Mammalia</taxon>
        <taxon>Eutheria</taxon>
        <taxon>Laurasiatheria</taxon>
        <taxon>Carnivora</taxon>
        <taxon>Caniformia</taxon>
        <taxon>Pinnipedia</taxon>
        <taxon>Phocidae</taxon>
        <taxon>Phocinae</taxon>
        <taxon>Phoca</taxon>
    </lineage>
</organism>
<accession>P0DTS5</accession>
<reference key="1">
    <citation type="submission" date="2018-12" db="EMBL/GenBank/DDBJ databases">
        <title>The genome of the Harbour Seal (Phoca vitulina).</title>
        <authorList>
            <person name="Culibrk L."/>
            <person name="Leelakumari S."/>
            <person name="Taylor G.A."/>
            <person name="Tse K."/>
            <person name="Cheng D."/>
            <person name="Chuah E."/>
            <person name="Kirk H."/>
            <person name="Pandoh P."/>
            <person name="Troussard A."/>
            <person name="Zhao Y."/>
            <person name="Mungall A."/>
            <person name="Moore R."/>
            <person name="Akhurst L."/>
            <person name="Marra M.A."/>
            <person name="Haulena M."/>
            <person name="Jones S.J.M."/>
        </authorList>
    </citation>
    <scope>NUCLEOTIDE SEQUENCE [LARGE SCALE GENOMIC DNA]</scope>
    <source>
        <tissue>Blood</tissue>
    </source>
</reference>
<reference key="2">
    <citation type="unpublished observations" date="2019-10">
        <authorList>
            <person name="Puppione D.L."/>
        </authorList>
    </citation>
    <scope>IDENTIFICATION</scope>
</reference>
<proteinExistence type="inferred from homology"/>